<comment type="function">
    <text evidence="1 2 3 5">Mediates bacterial resistance to streptomycin (PubMed:17609790, PubMed:3137862). Adenylates streptomycin on the O-6 residue (PubMed:15984036, PubMed:17609790, PubMed:3137862). Adenylates streptidine on the O-6 residue (PubMed:17609790). Does not act on spectinomycin, neomycin-B or kanamycin (PubMed:15984036, Ref.5). Specific for ATP and GTP nucleotides incorporating a purine ring. No reaction with CTP or UTP (PubMed:15984036).</text>
</comment>
<comment type="catalytic activity">
    <reaction evidence="1 2 5">
        <text>streptomycin + ATP = 6-O-adenylylstreptomycin + diphosphate</text>
        <dbReference type="Rhea" id="RHEA:63236"/>
        <dbReference type="ChEBI" id="CHEBI:30616"/>
        <dbReference type="ChEBI" id="CHEBI:33019"/>
        <dbReference type="ChEBI" id="CHEBI:58007"/>
        <dbReference type="ChEBI" id="CHEBI:146262"/>
    </reaction>
</comment>
<comment type="catalytic activity">
    <reaction evidence="1">
        <text>streptomycin + GTP = 6-O-guanylylstreptomycin + diphosphate</text>
        <dbReference type="Rhea" id="RHEA:69540"/>
        <dbReference type="ChEBI" id="CHEBI:33019"/>
        <dbReference type="ChEBI" id="CHEBI:37565"/>
        <dbReference type="ChEBI" id="CHEBI:58007"/>
        <dbReference type="ChEBI" id="CHEBI:184374"/>
    </reaction>
</comment>
<comment type="catalytic activity">
    <reaction evidence="2">
        <text>streptidine + ATP = 6-O-adenylylstreptidine + diphosphate</text>
        <dbReference type="Rhea" id="RHEA:69544"/>
        <dbReference type="ChEBI" id="CHEBI:30616"/>
        <dbReference type="ChEBI" id="CHEBI:33019"/>
        <dbReference type="ChEBI" id="CHEBI:184375"/>
        <dbReference type="ChEBI" id="CHEBI:184376"/>
    </reaction>
</comment>
<comment type="biophysicochemical properties">
    <kinetics>
        <KM evidence="5">0.08 uM for streptomycin</KM>
        <KM evidence="2">0.04 mM for streptomycin (at pH 7.5 and 25 degrees Celsius)</KM>
        <KM evidence="2">0.6 mM for streptidine (at pH 7.5 and 25 degrees Celsius)</KM>
        <Vmax evidence="5">4.0 pmol/min/mg enzyme with streptomycin as substrate</Vmax>
        <Vmax evidence="2">0.06 umol/min/mg enzyme with streptomycin as substrate (at pH 7.5 and 25 degrees Celsius)</Vmax>
        <Vmax evidence="2">0.0012 umol/min/mg enzyme with streptidine as substrate (at pH 7.5 and 25 degrees Celsius)</Vmax>
    </kinetics>
    <phDependence>
        <text evidence="5">Optimum pH is 8.0.</text>
    </phDependence>
    <temperatureDependence>
        <text evidence="5">Optimum temperature is 35 degrees Celsius.</text>
    </temperatureDependence>
</comment>
<comment type="subunit">
    <text evidence="1">Homodimer.</text>
</comment>
<comment type="subcellular location">
    <subcellularLocation>
        <location evidence="11">Cytoplasm</location>
    </subcellularLocation>
</comment>
<comment type="disruption phenotype">
    <text evidence="4">Very slight reduction in streptomycin MIC.</text>
</comment>
<comment type="biotechnology">
    <text evidence="2 6">Could be used as a selectable marker in B.subtilis if strongly expressed, could be used as a selectable marker in E.coli (Ref.7). Streptidine restores the antibiotic effectiveness of streptomycin in bacterial strains in which they both are co-administered together with a simultaneous overexpression of this enzyme (PubMed:17609790).</text>
</comment>
<comment type="miscellaneous">
    <text evidence="5">Although this enzyme can be purified from B.subtilis, the bacteria is sensitive to streptomycin in vivo.</text>
</comment>
<protein>
    <recommendedName>
        <fullName evidence="7 10">Aminoglycoside 6-adenylyltransferase</fullName>
        <ecNumber evidence="1 2 11">2.7.7.-</ecNumber>
    </recommendedName>
    <alternativeName>
        <fullName evidence="7">6-O-adenyl-transferase</fullName>
    </alternativeName>
    <alternativeName>
        <fullName evidence="10">AAD(6)</fullName>
    </alternativeName>
    <alternativeName>
        <fullName evidence="7 8">ANT(6)</fullName>
    </alternativeName>
    <alternativeName>
        <fullName evidence="8">Aminoglycoside inactivating enzyme</fullName>
    </alternativeName>
    <alternativeName>
        <fullName evidence="10">Sm inactivating enzyme</fullName>
    </alternativeName>
    <alternativeName>
        <fullName evidence="10">Streptomycin 6-adenylyltransferase</fullName>
    </alternativeName>
</protein>
<sequence>MRSEQEMMDIFLDFALNDERIRLVTLEGSRTNRNIPPDNFQDYDISYFVTDVESFKENDQWLEIFGKRIMMQKPEDMELFPPELGNWFSYIILFEDGNKLDLTLIPIREAEDYFANNDGLVKVLLDKDSFINYKVTPNDRQYWIKRPTAREFDDCCNEFWMVSTYVVKGLARNEILFAIDHLNEIVRPNLLRMMAWHIASQKGYSFSMGKNYKFMKRYLSNKEWEELMSTYSVNGYQEMWKSLFTCYALFRKYSKAVSEGLAYKYPDYDEGITKYTEGIYCSVK</sequence>
<organism>
    <name type="scientific">Bacillus subtilis (strain 168)</name>
    <dbReference type="NCBI Taxonomy" id="224308"/>
    <lineage>
        <taxon>Bacteria</taxon>
        <taxon>Bacillati</taxon>
        <taxon>Bacillota</taxon>
        <taxon>Bacilli</taxon>
        <taxon>Bacillales</taxon>
        <taxon>Bacillaceae</taxon>
        <taxon>Bacillus</taxon>
    </lineage>
</organism>
<accession>P17585</accession>
<accession>A0A6M3ZEA3</accession>
<keyword id="KW-0002">3D-structure</keyword>
<keyword id="KW-0963">Cytoplasm</keyword>
<keyword id="KW-0548">Nucleotidyltransferase</keyword>
<keyword id="KW-1185">Reference proteome</keyword>
<keyword id="KW-0808">Transferase</keyword>
<feature type="chain" id="PRO_0000064415" description="Aminoglycoside 6-adenylyltransferase">
    <location>
        <begin position="1"/>
        <end position="284"/>
    </location>
</feature>
<feature type="helix" evidence="14">
    <location>
        <begin position="4"/>
        <end position="17"/>
    </location>
</feature>
<feature type="strand" evidence="14">
    <location>
        <begin position="21"/>
        <end position="26"/>
    </location>
</feature>
<feature type="strand" evidence="14">
    <location>
        <begin position="43"/>
        <end position="50"/>
    </location>
</feature>
<feature type="helix" evidence="14">
    <location>
        <begin position="52"/>
        <end position="56"/>
    </location>
</feature>
<feature type="helix" evidence="14">
    <location>
        <begin position="60"/>
        <end position="65"/>
    </location>
</feature>
<feature type="strand" evidence="14">
    <location>
        <begin position="68"/>
        <end position="72"/>
    </location>
</feature>
<feature type="strand" evidence="14">
    <location>
        <begin position="78"/>
        <end position="80"/>
    </location>
</feature>
<feature type="strand" evidence="14">
    <location>
        <begin position="88"/>
        <end position="94"/>
    </location>
</feature>
<feature type="strand" evidence="14">
    <location>
        <begin position="99"/>
        <end position="106"/>
    </location>
</feature>
<feature type="helix" evidence="14">
    <location>
        <begin position="107"/>
        <end position="109"/>
    </location>
</feature>
<feature type="helix" evidence="14">
    <location>
        <begin position="110"/>
        <end position="115"/>
    </location>
</feature>
<feature type="strand" evidence="14">
    <location>
        <begin position="123"/>
        <end position="128"/>
    </location>
</feature>
<feature type="helix" evidence="14">
    <location>
        <begin position="139"/>
        <end position="141"/>
    </location>
</feature>
<feature type="helix" evidence="14">
    <location>
        <begin position="149"/>
        <end position="171"/>
    </location>
</feature>
<feature type="helix" evidence="14">
    <location>
        <begin position="175"/>
        <end position="184"/>
    </location>
</feature>
<feature type="helix" evidence="14">
    <location>
        <begin position="186"/>
        <end position="202"/>
    </location>
</feature>
<feature type="strand" evidence="14">
    <location>
        <begin position="205"/>
        <end position="207"/>
    </location>
</feature>
<feature type="helix" evidence="14">
    <location>
        <begin position="210"/>
        <end position="212"/>
    </location>
</feature>
<feature type="helix" evidence="14">
    <location>
        <begin position="215"/>
        <end position="217"/>
    </location>
</feature>
<feature type="helix" evidence="14">
    <location>
        <begin position="221"/>
        <end position="228"/>
    </location>
</feature>
<feature type="helix" evidence="14">
    <location>
        <begin position="236"/>
        <end position="261"/>
    </location>
</feature>
<feature type="helix" evidence="14">
    <location>
        <begin position="268"/>
        <end position="281"/>
    </location>
</feature>
<reference key="1">
    <citation type="journal article" date="1989" name="Gene">
        <title>Nucleotide sequence of the chromosomal gene coding for the aminoglycoside 6-adenylyltransferase from Bacillus subtilis Marburg 168.</title>
        <authorList>
            <person name="Ohmiya K."/>
            <person name="Tanaka T."/>
            <person name="Noguchi N."/>
            <person name="O'Hara K."/>
            <person name="Kono M."/>
        </authorList>
    </citation>
    <scope>NUCLEOTIDE SEQUENCE [GENOMIC DNA]</scope>
    <source>
        <strain>168</strain>
    </source>
</reference>
<reference key="2">
    <citation type="journal article" date="1997" name="Microbiology">
        <title>Sequence of the Bacillus subtilis genome region in the vicinity of the lev operon reveals two new extracytoplasmic function RNA polymerase sigma factors SigV and SigZ.</title>
        <authorList>
            <person name="Sorokin A."/>
            <person name="Bolotin A."/>
            <person name="Purnelle B."/>
            <person name="Hilbert H."/>
            <person name="Lauber J."/>
            <person name="Duesterhoeft A."/>
            <person name="Ehrlich S.D."/>
        </authorList>
    </citation>
    <scope>NUCLEOTIDE SEQUENCE [GENOMIC DNA]</scope>
    <source>
        <strain>168</strain>
    </source>
</reference>
<reference key="3">
    <citation type="journal article" date="1997" name="Nature">
        <title>The complete genome sequence of the Gram-positive bacterium Bacillus subtilis.</title>
        <authorList>
            <person name="Kunst F."/>
            <person name="Ogasawara N."/>
            <person name="Moszer I."/>
            <person name="Albertini A.M."/>
            <person name="Alloni G."/>
            <person name="Azevedo V."/>
            <person name="Bertero M.G."/>
            <person name="Bessieres P."/>
            <person name="Bolotin A."/>
            <person name="Borchert S."/>
            <person name="Borriss R."/>
            <person name="Boursier L."/>
            <person name="Brans A."/>
            <person name="Braun M."/>
            <person name="Brignell S.C."/>
            <person name="Bron S."/>
            <person name="Brouillet S."/>
            <person name="Bruschi C.V."/>
            <person name="Caldwell B."/>
            <person name="Capuano V."/>
            <person name="Carter N.M."/>
            <person name="Choi S.-K."/>
            <person name="Codani J.-J."/>
            <person name="Connerton I.F."/>
            <person name="Cummings N.J."/>
            <person name="Daniel R.A."/>
            <person name="Denizot F."/>
            <person name="Devine K.M."/>
            <person name="Duesterhoeft A."/>
            <person name="Ehrlich S.D."/>
            <person name="Emmerson P.T."/>
            <person name="Entian K.-D."/>
            <person name="Errington J."/>
            <person name="Fabret C."/>
            <person name="Ferrari E."/>
            <person name="Foulger D."/>
            <person name="Fritz C."/>
            <person name="Fujita M."/>
            <person name="Fujita Y."/>
            <person name="Fuma S."/>
            <person name="Galizzi A."/>
            <person name="Galleron N."/>
            <person name="Ghim S.-Y."/>
            <person name="Glaser P."/>
            <person name="Goffeau A."/>
            <person name="Golightly E.J."/>
            <person name="Grandi G."/>
            <person name="Guiseppi G."/>
            <person name="Guy B.J."/>
            <person name="Haga K."/>
            <person name="Haiech J."/>
            <person name="Harwood C.R."/>
            <person name="Henaut A."/>
            <person name="Hilbert H."/>
            <person name="Holsappel S."/>
            <person name="Hosono S."/>
            <person name="Hullo M.-F."/>
            <person name="Itaya M."/>
            <person name="Jones L.-M."/>
            <person name="Joris B."/>
            <person name="Karamata D."/>
            <person name="Kasahara Y."/>
            <person name="Klaerr-Blanchard M."/>
            <person name="Klein C."/>
            <person name="Kobayashi Y."/>
            <person name="Koetter P."/>
            <person name="Koningstein G."/>
            <person name="Krogh S."/>
            <person name="Kumano M."/>
            <person name="Kurita K."/>
            <person name="Lapidus A."/>
            <person name="Lardinois S."/>
            <person name="Lauber J."/>
            <person name="Lazarevic V."/>
            <person name="Lee S.-M."/>
            <person name="Levine A."/>
            <person name="Liu H."/>
            <person name="Masuda S."/>
            <person name="Mauel C."/>
            <person name="Medigue C."/>
            <person name="Medina N."/>
            <person name="Mellado R.P."/>
            <person name="Mizuno M."/>
            <person name="Moestl D."/>
            <person name="Nakai S."/>
            <person name="Noback M."/>
            <person name="Noone D."/>
            <person name="O'Reilly M."/>
            <person name="Ogawa K."/>
            <person name="Ogiwara A."/>
            <person name="Oudega B."/>
            <person name="Park S.-H."/>
            <person name="Parro V."/>
            <person name="Pohl T.M."/>
            <person name="Portetelle D."/>
            <person name="Porwollik S."/>
            <person name="Prescott A.M."/>
            <person name="Presecan E."/>
            <person name="Pujic P."/>
            <person name="Purnelle B."/>
            <person name="Rapoport G."/>
            <person name="Rey M."/>
            <person name="Reynolds S."/>
            <person name="Rieger M."/>
            <person name="Rivolta C."/>
            <person name="Rocha E."/>
            <person name="Roche B."/>
            <person name="Rose M."/>
            <person name="Sadaie Y."/>
            <person name="Sato T."/>
            <person name="Scanlan E."/>
            <person name="Schleich S."/>
            <person name="Schroeter R."/>
            <person name="Scoffone F."/>
            <person name="Sekiguchi J."/>
            <person name="Sekowska A."/>
            <person name="Seror S.J."/>
            <person name="Serror P."/>
            <person name="Shin B.-S."/>
            <person name="Soldo B."/>
            <person name="Sorokin A."/>
            <person name="Tacconi E."/>
            <person name="Takagi T."/>
            <person name="Takahashi H."/>
            <person name="Takemaru K."/>
            <person name="Takeuchi M."/>
            <person name="Tamakoshi A."/>
            <person name="Tanaka T."/>
            <person name="Terpstra P."/>
            <person name="Tognoni A."/>
            <person name="Tosato V."/>
            <person name="Uchiyama S."/>
            <person name="Vandenbol M."/>
            <person name="Vannier F."/>
            <person name="Vassarotti A."/>
            <person name="Viari A."/>
            <person name="Wambutt R."/>
            <person name="Wedler E."/>
            <person name="Wedler H."/>
            <person name="Weitzenegger T."/>
            <person name="Winters P."/>
            <person name="Wipat A."/>
            <person name="Yamamoto H."/>
            <person name="Yamane K."/>
            <person name="Yasumoto K."/>
            <person name="Yata K."/>
            <person name="Yoshida K."/>
            <person name="Yoshikawa H.-F."/>
            <person name="Zumstein E."/>
            <person name="Yoshikawa H."/>
            <person name="Danchin A."/>
        </authorList>
    </citation>
    <scope>NUCLEOTIDE SEQUENCE [LARGE SCALE GENOMIC DNA]</scope>
    <source>
        <strain>168</strain>
    </source>
</reference>
<reference evidence="12" key="4">
    <citation type="journal article" date="2021" name="ISME J.">
        <title>Pervasive prophage recombination occurs during evolution of spore-forming Bacilli.</title>
        <authorList>
            <person name="Dragos A."/>
            <person name="Priyadarshini B."/>
            <person name="Hasan Z."/>
            <person name="Strube M.L."/>
            <person name="Kempen P.J."/>
            <person name="Maroti G."/>
            <person name="Kaspar C."/>
            <person name="Bose B."/>
            <person name="Burton B.M."/>
            <person name="Bischofs I.B."/>
            <person name="Kovacs A.T."/>
        </authorList>
    </citation>
    <scope>NUCLEOTIDE SEQUENCE [LARGE SCALE GENOMIC DNA]</scope>
    <source>
        <strain evidence="12">168 / B410wtB</strain>
    </source>
</reference>
<reference key="5">
    <citation type="journal article" date="1987" name="FEMS Microbiol. Lett.">
        <title>Purification and characterization of chromosomal streptomycin adenylyltransferase from derivatives of Bacillus subtilis Marburg 168.</title>
        <authorList>
            <person name="Kono M."/>
            <person name="Ohmiya K."/>
            <person name="Kanda T."/>
            <person name="Noguchi N."/>
            <person name="O'Hara K."/>
        </authorList>
    </citation>
    <scope>FUNCTION IN STREPTOMYCIN ADENYLATION</scope>
    <scope>BIOPHYSICOCHEMICAL PROPERTIES</scope>
    <scope>SUBCELLULAR LOCATION</scope>
    <source>
        <strain>168 / BD224</strain>
    </source>
</reference>
<reference key="6">
    <citation type="journal article" date="1988" name="Antimicrob. Agents Chemother.">
        <title>Structure of adenylylated streptomycin synthesized enzymatically by Bacillus subtilis.</title>
        <authorList>
            <person name="O'Hara K."/>
            <person name="Ohmiya K."/>
            <person name="Kono M."/>
        </authorList>
    </citation>
    <scope>FUNCTION IN STREPTOMYCIN ADENYLATION</scope>
    <scope>REACTION PRODUCT</scope>
</reference>
<reference key="7">
    <citation type="journal article" date="1989" name="Agric. Biol. Chem.">
        <title>Expression of the Aminoglycoside 6-Adenylyltransferase Coding Gene from Bacillus suhtilis in Escherichia coli.</title>
        <authorList>
            <person name="Noguchi N."/>
            <person name="Ohmiya K."/>
            <person name="Tanaka T."/>
            <person name="O'Hara K."/>
            <person name="Kono M."/>
        </authorList>
    </citation>
    <scope>BIOTECHNOLOGY</scope>
</reference>
<reference key="8">
    <citation type="journal article" date="1993" name="FEMS Microbiol. Lett.">
        <title>Genetic mapping in Bacillus subtilis 168 of the aadK gene which encodes aminoglycoside 6-adenylyltransferase.</title>
        <authorList>
            <person name="Noguchi N."/>
            <person name="Sasatsu M."/>
            <person name="Kono M."/>
        </authorList>
    </citation>
    <scope>GENE MAPPING</scope>
    <scope>DISRUPTION PHENOTYPE</scope>
</reference>
<reference key="9">
    <citation type="journal article" date="2005" name="Chemistry">
        <title>Molecular recognition of aminoglycoside antibiotics by bacterial defence proteins: NMR study of the structural and conformational features of streptomycin inactivation by Bacillus subtilis aminoglycoside-6-adenyl transferase.</title>
        <authorList>
            <person name="Corzana F."/>
            <person name="Cuesta I."/>
            <person name="Bastida A."/>
            <person name="Hidalgo A."/>
            <person name="Latorre M."/>
            <person name="Gonzalez C."/>
            <person name="Garcia-Junceda E."/>
            <person name="Jimenez-Barbero J."/>
            <person name="Asensio J.L."/>
        </authorList>
    </citation>
    <scope>FUNCTION</scope>
    <scope>CATALYTIC ACTIVITY</scope>
    <scope>SUBSTRATE SPECIFICITY</scope>
    <scope>SUBUNIT</scope>
</reference>
<reference key="10">
    <citation type="journal article" date="2007" name="Chem. Commun. (Camb.)">
        <title>Rescue of the streptomycin antibiotic activity by using streptidine as a 'decoy acceptor' for the aminoglycoside-inactivating enzyme adenyl transferase.</title>
        <authorList>
            <person name="Latorre M."/>
            <person name="Penalver P."/>
            <person name="Revuelta J."/>
            <person name="Asensio J.L."/>
            <person name="Garcia-Junceda E."/>
            <person name="Bastida A."/>
        </authorList>
    </citation>
    <scope>FUNCTION</scope>
    <scope>CATALYTIC ACTIVITY</scope>
    <scope>BIOPHYSICOCHEMICAL PROPERTIES</scope>
    <scope>BIOTECHNOLOGY</scope>
</reference>
<reference evidence="13" key="11">
    <citation type="submission" date="2007-03" db="PDB data bank">
        <title>The crystal structure of an aminoglycoside 6-adenyltransferase from Bacillus subtilis.</title>
        <authorList>
            <person name="Tyagi R."/>
            <person name="Eswaramoorthy S."/>
            <person name="Burley S.K."/>
            <person name="Swaminathan S."/>
        </authorList>
    </citation>
    <scope>X-RAY CRYSTALLOGRAPHY (2.65 ANGSTROMS) OF 2-284</scope>
</reference>
<evidence type="ECO:0000269" key="1">
    <source>
    </source>
</evidence>
<evidence type="ECO:0000269" key="2">
    <source>
    </source>
</evidence>
<evidence type="ECO:0000269" key="3">
    <source>
    </source>
</evidence>
<evidence type="ECO:0000269" key="4">
    <source>
    </source>
</evidence>
<evidence type="ECO:0000269" key="5">
    <source ref="5"/>
</evidence>
<evidence type="ECO:0000269" key="6">
    <source ref="7"/>
</evidence>
<evidence type="ECO:0000303" key="7">
    <source>
    </source>
</evidence>
<evidence type="ECO:0000303" key="8">
    <source>
    </source>
</evidence>
<evidence type="ECO:0000303" key="9">
    <source>
    </source>
</evidence>
<evidence type="ECO:0000303" key="10">
    <source ref="5"/>
</evidence>
<evidence type="ECO:0000305" key="11">
    <source ref="5"/>
</evidence>
<evidence type="ECO:0000312" key="12">
    <source>
        <dbReference type="EMBL" id="QJP89398.1"/>
    </source>
</evidence>
<evidence type="ECO:0007744" key="13">
    <source>
        <dbReference type="PDB" id="2PBE"/>
    </source>
</evidence>
<evidence type="ECO:0007829" key="14">
    <source>
        <dbReference type="PDB" id="2PBE"/>
    </source>
</evidence>
<name>AADK_BACSU</name>
<proteinExistence type="evidence at protein level"/>
<dbReference type="EC" id="2.7.7.-" evidence="1 2 11"/>
<dbReference type="EMBL" id="M26879">
    <property type="protein sequence ID" value="AAA22190.1"/>
    <property type="molecule type" value="Genomic_DNA"/>
</dbReference>
<dbReference type="EMBL" id="U93875">
    <property type="protein sequence ID" value="AAB80892.1"/>
    <property type="molecule type" value="Genomic_DNA"/>
</dbReference>
<dbReference type="EMBL" id="U93876">
    <property type="protein sequence ID" value="AAB80893.1"/>
    <property type="molecule type" value="Genomic_DNA"/>
</dbReference>
<dbReference type="EMBL" id="AL009126">
    <property type="protein sequence ID" value="CAB14620.1"/>
    <property type="molecule type" value="Genomic_DNA"/>
</dbReference>
<dbReference type="EMBL" id="CP052842">
    <property type="protein sequence ID" value="QJP89398.1"/>
    <property type="molecule type" value="Genomic_DNA"/>
</dbReference>
<dbReference type="PIR" id="JU0059">
    <property type="entry name" value="XXBSG"/>
</dbReference>
<dbReference type="RefSeq" id="NP_390556.1">
    <property type="nucleotide sequence ID" value="NC_000964.3"/>
</dbReference>
<dbReference type="PDB" id="2PBE">
    <property type="method" value="X-ray"/>
    <property type="resolution" value="2.65 A"/>
    <property type="chains" value="A=2-284"/>
</dbReference>
<dbReference type="PDBsum" id="2PBE"/>
<dbReference type="SMR" id="P17585"/>
<dbReference type="FunCoup" id="P17585">
    <property type="interactions" value="25"/>
</dbReference>
<dbReference type="STRING" id="224308.BSU26790"/>
<dbReference type="CARD" id="ARO:3002627">
    <property type="molecule name" value="aadK"/>
    <property type="mechanism identifier" value="ARO:0001004"/>
    <property type="mechanism name" value="antibiotic inactivation"/>
</dbReference>
<dbReference type="PaxDb" id="224308-BSU26790"/>
<dbReference type="EnsemblBacteria" id="CAB14620">
    <property type="protein sequence ID" value="CAB14620"/>
    <property type="gene ID" value="BSU_26790"/>
</dbReference>
<dbReference type="GeneID" id="938061"/>
<dbReference type="KEGG" id="bsu:BSU26790"/>
<dbReference type="PATRIC" id="fig|224308.179.peg.2910"/>
<dbReference type="eggNOG" id="ENOG502Z7S1">
    <property type="taxonomic scope" value="Bacteria"/>
</dbReference>
<dbReference type="InParanoid" id="P17585"/>
<dbReference type="OrthoDB" id="9776406at2"/>
<dbReference type="BioCyc" id="BSUB:BSU26790-MONOMER"/>
<dbReference type="BioCyc" id="MetaCyc:BSU26790-MONOMER"/>
<dbReference type="EvolutionaryTrace" id="P17585"/>
<dbReference type="Proteomes" id="UP000001570">
    <property type="component" value="Chromosome"/>
</dbReference>
<dbReference type="GO" id="GO:0005737">
    <property type="term" value="C:cytoplasm"/>
    <property type="evidence" value="ECO:0000314"/>
    <property type="project" value="UniProtKB"/>
</dbReference>
<dbReference type="GO" id="GO:0070566">
    <property type="term" value="F:adenylyltransferase activity"/>
    <property type="evidence" value="ECO:0000314"/>
    <property type="project" value="UniProtKB"/>
</dbReference>
<dbReference type="GO" id="GO:0042803">
    <property type="term" value="F:protein homodimerization activity"/>
    <property type="evidence" value="ECO:0000314"/>
    <property type="project" value="UniProtKB"/>
</dbReference>
<dbReference type="GO" id="GO:0071239">
    <property type="term" value="P:cellular response to streptomycin"/>
    <property type="evidence" value="ECO:0000314"/>
    <property type="project" value="UniProtKB"/>
</dbReference>
<dbReference type="Gene3D" id="3.30.460.10">
    <property type="entry name" value="Beta Polymerase, domain 2"/>
    <property type="match status" value="1"/>
</dbReference>
<dbReference type="Gene3D" id="1.20.120.330">
    <property type="entry name" value="Nucleotidyltransferases domain 2"/>
    <property type="match status" value="1"/>
</dbReference>
<dbReference type="InterPro" id="IPR007530">
    <property type="entry name" value="Aminoglycoside_adenylylTfrase"/>
</dbReference>
<dbReference type="InterPro" id="IPR043519">
    <property type="entry name" value="NT_sf"/>
</dbReference>
<dbReference type="NCBIfam" id="NF033084">
    <property type="entry name" value="ANT_6"/>
    <property type="match status" value="1"/>
</dbReference>
<dbReference type="NCBIfam" id="NF000312">
    <property type="entry name" value="ANT_6_aadK"/>
    <property type="match status" value="1"/>
</dbReference>
<dbReference type="Pfam" id="PF04439">
    <property type="entry name" value="Adenyl_transf"/>
    <property type="match status" value="1"/>
</dbReference>
<dbReference type="PIRSF" id="PIRSF000812">
    <property type="entry name" value="AAD"/>
    <property type="match status" value="1"/>
</dbReference>
<dbReference type="SUPFAM" id="SSF81301">
    <property type="entry name" value="Nucleotidyltransferase"/>
    <property type="match status" value="1"/>
</dbReference>
<dbReference type="SUPFAM" id="SSF81631">
    <property type="entry name" value="PAP/OAS1 substrate-binding domain"/>
    <property type="match status" value="1"/>
</dbReference>
<gene>
    <name evidence="8 9 12" type="primary">aadK</name>
    <name type="ordered locus">BSU26790</name>
    <name evidence="12" type="ORF">HIR78_15755</name>
</gene>